<reference key="1">
    <citation type="journal article" date="1999" name="J. Gen. Virol.">
        <title>The BM2 protein of influenza B virus is synthesized in the late phase of infection and incorporated into virions as a subviral component.</title>
        <authorList>
            <person name="Odagiri T."/>
            <person name="Hong J."/>
            <person name="Ohara Y."/>
        </authorList>
    </citation>
    <scope>NUCLEOTIDE SEQUENCE [GENOMIC RNA]</scope>
    <scope>PHOSPHORYLATION</scope>
</reference>
<reference key="2">
    <citation type="journal article" date="2003" name="J. Virol.">
        <title>Influenza B virus BM2 protein is transported through the trans-Golgi network as an integral membrane protein.</title>
        <authorList>
            <person name="Watanabe S."/>
            <person name="Imai M."/>
            <person name="Ohara Y."/>
            <person name="Odagiri T."/>
        </authorList>
    </citation>
    <scope>SUBUNIT</scope>
</reference>
<reference key="3">
    <citation type="journal article" date="2004" name="J. Virol.">
        <title>Influenza B virus BM2 protein is a crucial component for incorporation of viral ribonucleoprotein complex into virions during virus assembly.</title>
        <authorList>
            <person name="Imai M."/>
            <person name="Watanabe S."/>
            <person name="Ninomiya A."/>
            <person name="Obuchi M."/>
            <person name="Odagiri T."/>
        </authorList>
    </citation>
    <scope>FUNCTION</scope>
</reference>
<reference key="4">
    <citation type="journal article" date="2008" name="J. Virol.">
        <title>Cytoplasmic domain of influenza B virus BM2 protein plays critical roles in production of infectious virus.</title>
        <authorList>
            <person name="Imai M."/>
            <person name="Kawasaki K."/>
            <person name="Odagiri T."/>
        </authorList>
    </citation>
    <scope>FUNCTION</scope>
</reference>
<protein>
    <recommendedName>
        <fullName>Matrix protein 2</fullName>
    </recommendedName>
    <alternativeName>
        <fullName>BM2</fullName>
    </alternativeName>
</protein>
<proteinExistence type="evidence at protein level"/>
<gene>
    <name type="primary">M</name>
</gene>
<organismHost>
    <name type="scientific">Homo sapiens</name>
    <name type="common">Human</name>
    <dbReference type="NCBI Taxonomy" id="9606"/>
</organismHost>
<dbReference type="EMBL" id="AF077348">
    <property type="status" value="NOT_ANNOTATED_CDS"/>
    <property type="molecule type" value="Genomic_RNA"/>
</dbReference>
<dbReference type="SMR" id="P0C0X4"/>
<dbReference type="GO" id="GO:0020002">
    <property type="term" value="C:host cell plasma membrane"/>
    <property type="evidence" value="ECO:0007669"/>
    <property type="project" value="UniProtKB-SubCell"/>
</dbReference>
<dbReference type="GO" id="GO:0016020">
    <property type="term" value="C:membrane"/>
    <property type="evidence" value="ECO:0007669"/>
    <property type="project" value="UniProtKB-KW"/>
</dbReference>
<dbReference type="GO" id="GO:0055036">
    <property type="term" value="C:virion membrane"/>
    <property type="evidence" value="ECO:0007669"/>
    <property type="project" value="UniProtKB-SubCell"/>
</dbReference>
<dbReference type="GO" id="GO:0015267">
    <property type="term" value="F:channel activity"/>
    <property type="evidence" value="ECO:0007669"/>
    <property type="project" value="UniProtKB-KW"/>
</dbReference>
<dbReference type="GO" id="GO:1902600">
    <property type="term" value="P:proton transmembrane transport"/>
    <property type="evidence" value="ECO:0007669"/>
    <property type="project" value="UniProtKB-KW"/>
</dbReference>
<dbReference type="Gene3D" id="6.10.250.350">
    <property type="match status" value="1"/>
</dbReference>
<dbReference type="InterPro" id="IPR006859">
    <property type="entry name" value="Flu_B_M2"/>
</dbReference>
<dbReference type="Pfam" id="PF04772">
    <property type="entry name" value="Flu_B_M2"/>
    <property type="match status" value="1"/>
</dbReference>
<sequence>MLEPFQILSICSFILSALHFMGWTIGHLNQIKRGVNLKIRIRNPNKETINREVSILRHSYQKEIQAKETIKEVLSDNMERLSDHIVIEGLSAEEIIKMGETVLEVEELH</sequence>
<feature type="chain" id="PRO_0000078901" description="Matrix protein 2">
    <location>
        <begin position="1"/>
        <end position="109"/>
    </location>
</feature>
<feature type="topological domain" description="Virion surface" evidence="2">
    <location>
        <begin position="1"/>
        <end position="4"/>
    </location>
</feature>
<feature type="transmembrane region" description="Helical; Signal-anchor for type III membrane protein" evidence="2">
    <location>
        <begin position="5"/>
        <end position="27"/>
    </location>
</feature>
<feature type="topological domain" description="Intravirion" evidence="2">
    <location>
        <begin position="28"/>
        <end position="109"/>
    </location>
</feature>
<feature type="coiled-coil region" evidence="2">
    <location>
        <begin position="59"/>
        <end position="83"/>
    </location>
</feature>
<feature type="site" description="Essential for channel activity, possibly by being protonated during channel activation, and by forming the channel gate and the selective filter" evidence="1">
    <location>
        <position position="19"/>
    </location>
</feature>
<feature type="site" description="Seems to be involved in pH gating" evidence="1">
    <location>
        <position position="23"/>
    </location>
</feature>
<evidence type="ECO:0000250" key="1"/>
<evidence type="ECO:0000255" key="2"/>
<evidence type="ECO:0000269" key="3">
    <source>
    </source>
</evidence>
<evidence type="ECO:0000269" key="4">
    <source>
    </source>
</evidence>
<evidence type="ECO:0000269" key="5">
    <source>
    </source>
</evidence>
<evidence type="ECO:0000305" key="6"/>
<name>BM2_INBYA</name>
<organism>
    <name type="scientific">Influenza B virus (strain B/Yamagata/1/1973)</name>
    <dbReference type="NCBI Taxonomy" id="11550"/>
    <lineage>
        <taxon>Viruses</taxon>
        <taxon>Riboviria</taxon>
        <taxon>Orthornavirae</taxon>
        <taxon>Negarnaviricota</taxon>
        <taxon>Polyploviricotina</taxon>
        <taxon>Insthoviricetes</taxon>
        <taxon>Articulavirales</taxon>
        <taxon>Orthomyxoviridae</taxon>
        <taxon>Betainfluenzavirus</taxon>
        <taxon>Betainfluenzavirus influenzae</taxon>
        <taxon>Influenza B virus</taxon>
    </lineage>
</organism>
<accession>P0C0X4</accession>
<keyword id="KW-0175">Coiled coil</keyword>
<keyword id="KW-1032">Host cell membrane</keyword>
<keyword id="KW-1043">Host membrane</keyword>
<keyword id="KW-0375">Hydrogen ion transport</keyword>
<keyword id="KW-0407">Ion channel</keyword>
<keyword id="KW-0406">Ion transport</keyword>
<keyword id="KW-0472">Membrane</keyword>
<keyword id="KW-0597">Phosphoprotein</keyword>
<keyword id="KW-0735">Signal-anchor</keyword>
<keyword id="KW-0812">Transmembrane</keyword>
<keyword id="KW-1133">Transmembrane helix</keyword>
<keyword id="KW-0813">Transport</keyword>
<keyword id="KW-1182">Viral ion channel</keyword>
<keyword id="KW-0946">Virion</keyword>
<comment type="function">
    <text evidence="1 4 5">Forms presumably a highly low-pH gated proton-selective channel. Trp-23 may function as a minimalistic gate that opens and closes the pore. When the environmental pH is lower than a threshold, the BM2 channel would be activated and selectively transport protons across the membrane from the extracellular side to the cytoplasmic side. Crucial for the uncoating process. When the virion is internalized into the endosome, the channel acidifies the virion's interior, promoting the dissociation of matrix protein 1 (M1) from the ribonucleoprotein (RNP) thus allowing the transport of the RNP from the virion into the cell's nucleus. Also plays a role in viral proteins secretory pathway. Elevates the intravesicular pH of normally acidic compartments, such as trans-Golgi network, preventing newly formed hemagglutinin from premature switching to the fusion-active conformation (By similarity). Plays a crucial role in virion assembly. Expressed in the late phase of the infection.</text>
</comment>
<comment type="subunit">
    <text evidence="1">Homotetramer.</text>
</comment>
<comment type="subcellular location">
    <subcellularLocation>
        <location evidence="6">Virion membrane</location>
        <topology evidence="6">Single-pass type III membrane protein</topology>
    </subcellularLocation>
    <subcellularLocation>
        <location evidence="1">Host cell membrane</location>
        <topology evidence="1">Single-pass type III membrane protein</topology>
    </subcellularLocation>
    <text evidence="1">Transported to the plasma membrane through the trans Golgi network.</text>
</comment>
<comment type="PTM">
    <text evidence="3">Phosphorylated by host.</text>
</comment>
<comment type="miscellaneous">
    <text>Influenza B virus genome RNA segment 7 encodes the M1 (AC Q71UK7) and BM2 proteins. Normal translation produces the M1 protein. The M1 termination codon overlaps the BM2 initiation codon in an overlapping stop-start pentanucleotide 5'-UAAUG-3'. Termination of M1 translation triggers reinitiation on the BM2 AUG in the +2 open reading frame.</text>
</comment>